<proteinExistence type="inferred from homology"/>
<dbReference type="EC" id="5.2.1.8"/>
<dbReference type="EMBL" id="M83946">
    <property type="protein sequence ID" value="AAA25247.1"/>
    <property type="molecule type" value="Genomic_DNA"/>
</dbReference>
<dbReference type="PIR" id="A44858">
    <property type="entry name" value="A44858"/>
</dbReference>
<dbReference type="RefSeq" id="WP_003661851.1">
    <property type="nucleotide sequence ID" value="NZ_RIPP01000106.1"/>
</dbReference>
<dbReference type="SMR" id="Q02473"/>
<dbReference type="MEROPS" id="X15.001"/>
<dbReference type="GO" id="GO:0005886">
    <property type="term" value="C:plasma membrane"/>
    <property type="evidence" value="ECO:0007669"/>
    <property type="project" value="UniProtKB-SubCell"/>
</dbReference>
<dbReference type="GO" id="GO:0003755">
    <property type="term" value="F:peptidyl-prolyl cis-trans isomerase activity"/>
    <property type="evidence" value="ECO:0007669"/>
    <property type="project" value="UniProtKB-UniRule"/>
</dbReference>
<dbReference type="GO" id="GO:0006457">
    <property type="term" value="P:protein folding"/>
    <property type="evidence" value="ECO:0007669"/>
    <property type="project" value="UniProtKB-UniRule"/>
</dbReference>
<dbReference type="Gene3D" id="3.10.50.40">
    <property type="match status" value="1"/>
</dbReference>
<dbReference type="HAMAP" id="MF_01145">
    <property type="entry name" value="Foldase_PrsA"/>
    <property type="match status" value="1"/>
</dbReference>
<dbReference type="InterPro" id="IPR023059">
    <property type="entry name" value="Foldase_PrsA"/>
</dbReference>
<dbReference type="InterPro" id="IPR046357">
    <property type="entry name" value="PPIase_dom_sf"/>
</dbReference>
<dbReference type="InterPro" id="IPR000297">
    <property type="entry name" value="PPIase_PpiC"/>
</dbReference>
<dbReference type="InterPro" id="IPR023058">
    <property type="entry name" value="PPIase_PpiC_CS"/>
</dbReference>
<dbReference type="InterPro" id="IPR050245">
    <property type="entry name" value="PrsA_foldase"/>
</dbReference>
<dbReference type="InterPro" id="IPR027304">
    <property type="entry name" value="Trigger_fact/SurA_dom_sf"/>
</dbReference>
<dbReference type="NCBIfam" id="NF003356">
    <property type="entry name" value="PRK04405.1"/>
    <property type="match status" value="1"/>
</dbReference>
<dbReference type="PANTHER" id="PTHR47245:SF1">
    <property type="entry name" value="FOLDASE PROTEIN PRSA"/>
    <property type="match status" value="1"/>
</dbReference>
<dbReference type="PANTHER" id="PTHR47245">
    <property type="entry name" value="PEPTIDYLPROLYL ISOMERASE"/>
    <property type="match status" value="1"/>
</dbReference>
<dbReference type="Pfam" id="PF00639">
    <property type="entry name" value="Rotamase"/>
    <property type="match status" value="1"/>
</dbReference>
<dbReference type="SUPFAM" id="SSF54534">
    <property type="entry name" value="FKBP-like"/>
    <property type="match status" value="1"/>
</dbReference>
<dbReference type="SUPFAM" id="SSF109998">
    <property type="entry name" value="Triger factor/SurA peptide-binding domain-like"/>
    <property type="match status" value="1"/>
</dbReference>
<dbReference type="PROSITE" id="PS01096">
    <property type="entry name" value="PPIC_PPIASE_1"/>
    <property type="match status" value="1"/>
</dbReference>
<dbReference type="PROSITE" id="PS50198">
    <property type="entry name" value="PPIC_PPIASE_2"/>
    <property type="match status" value="1"/>
</dbReference>
<dbReference type="PROSITE" id="PS51257">
    <property type="entry name" value="PROKAR_LIPOPROTEIN"/>
    <property type="match status" value="1"/>
</dbReference>
<reference key="1">
    <citation type="journal article" date="1992" name="J. Gen. Microbiol.">
        <title>Cloning, sequencing and expression of the gene encoding the cell-envelope-associated proteinase from Lactobacillus paracasei subsp. paracasei NCDO 151.</title>
        <authorList>
            <person name="Holck A."/>
            <person name="Naes H."/>
        </authorList>
    </citation>
    <scope>NUCLEOTIDE SEQUENCE [GENOMIC DNA]</scope>
    <source>
        <strain>ATCC 25302 / DSM 5622 / BCRC 12248 / JCM 8130 / KCTC 3510 / LMG 13087 / NBRC 15889 / NCDO 151 / RO94</strain>
    </source>
</reference>
<protein>
    <recommendedName>
        <fullName>Foldase protein PrsA</fullName>
        <ecNumber>5.2.1.8</ecNumber>
    </recommendedName>
    <alternativeName>
        <fullName>Protease maturation protein PrtM</fullName>
    </alternativeName>
</protein>
<gene>
    <name type="primary">prsA</name>
    <name type="synonym">prtM</name>
</gene>
<accession>Q02473</accession>
<comment type="function">
    <text>This protein is essential for production of active forms of the serine proteinase located in or secreted from the cell envelope.</text>
</comment>
<comment type="catalytic activity">
    <reaction>
        <text>[protein]-peptidylproline (omega=180) = [protein]-peptidylproline (omega=0)</text>
        <dbReference type="Rhea" id="RHEA:16237"/>
        <dbReference type="Rhea" id="RHEA-COMP:10747"/>
        <dbReference type="Rhea" id="RHEA-COMP:10748"/>
        <dbReference type="ChEBI" id="CHEBI:83833"/>
        <dbReference type="ChEBI" id="CHEBI:83834"/>
        <dbReference type="EC" id="5.2.1.8"/>
    </reaction>
</comment>
<comment type="subcellular location">
    <subcellularLocation>
        <location evidence="2">Cell membrane</location>
        <topology evidence="2">Lipid-anchor</topology>
    </subcellularLocation>
</comment>
<comment type="similarity">
    <text evidence="2">Belongs to the PrsA family.</text>
</comment>
<feature type="signal peptide" evidence="1">
    <location>
        <begin position="1"/>
        <end position="23"/>
    </location>
</feature>
<feature type="chain" id="PRO_0000029306" description="Foldase protein PrsA">
    <location>
        <begin position="24"/>
        <end position="299"/>
    </location>
</feature>
<feature type="domain" description="PpiC">
    <location>
        <begin position="144"/>
        <end position="236"/>
    </location>
</feature>
<feature type="lipid moiety-binding region" description="N-palmitoyl cysteine" evidence="1">
    <location>
        <position position="24"/>
    </location>
</feature>
<feature type="lipid moiety-binding region" description="S-diacylglycerol cysteine" evidence="1">
    <location>
        <position position="24"/>
    </location>
</feature>
<name>PRSA_LACPA</name>
<sequence length="299" mass="33146">MKKKMRLKVLLASTATALLLLSGCQSNQADQKVATYSGGKVTESNFYKELKQSPTTKTMLANMLIYRALNHAYGKSVSTKTVNDAYDSYKQQYGENFDAFLSQNGFSRSSFKESLRTNFLSEVALKKLKKVSESQLKAVWKTYQPKVTVQHILTSDEDTAKQVISDLAAGKDFATLAKTDSIDTATKDNGGKISFESNNKTLDATFKDAAYKLKNGDYTQTPVKVTNGYEVIKMINHPAKGTFTSSKKALTASVYAKWSRDSSIMQRVISQVLKNQHVTIKDKDLADALDSYKKPATTN</sequence>
<organism>
    <name type="scientific">Lacticaseibacillus paracasei</name>
    <name type="common">Lactobacillus paracasei</name>
    <dbReference type="NCBI Taxonomy" id="1597"/>
    <lineage>
        <taxon>Bacteria</taxon>
        <taxon>Bacillati</taxon>
        <taxon>Bacillota</taxon>
        <taxon>Bacilli</taxon>
        <taxon>Lactobacillales</taxon>
        <taxon>Lactobacillaceae</taxon>
        <taxon>Lacticaseibacillus</taxon>
    </lineage>
</organism>
<keyword id="KW-1003">Cell membrane</keyword>
<keyword id="KW-0413">Isomerase</keyword>
<keyword id="KW-0449">Lipoprotein</keyword>
<keyword id="KW-0472">Membrane</keyword>
<keyword id="KW-0564">Palmitate</keyword>
<keyword id="KW-0697">Rotamase</keyword>
<keyword id="KW-0732">Signal</keyword>
<evidence type="ECO:0000255" key="1"/>
<evidence type="ECO:0000305" key="2"/>